<protein>
    <recommendedName>
        <fullName>Protein MGF 110-6L</fullName>
    </recommendedName>
</protein>
<gene>
    <name type="ordered locus">BA71V-015</name>
    <name type="ordered locus">BA71V-016</name>
    <name type="ORF">V118</name>
    <name type="ORF">Y118L</name>
</gene>
<organism>
    <name type="scientific">African swine fever virus (strain Badajoz 1971 Vero-adapted)</name>
    <name type="common">Ba71V</name>
    <name type="synonym">ASFV</name>
    <dbReference type="NCBI Taxonomy" id="10498"/>
    <lineage>
        <taxon>Viruses</taxon>
        <taxon>Varidnaviria</taxon>
        <taxon>Bamfordvirae</taxon>
        <taxon>Nucleocytoviricota</taxon>
        <taxon>Pokkesviricetes</taxon>
        <taxon>Asfuvirales</taxon>
        <taxon>Asfarviridae</taxon>
        <taxon>Asfivirus</taxon>
        <taxon>African swine fever virus</taxon>
    </lineage>
</organism>
<keyword id="KW-0244">Early protein</keyword>
<keyword id="KW-0325">Glycoprotein</keyword>
<keyword id="KW-1038">Host endoplasmic reticulum</keyword>
<keyword id="KW-1185">Reference proteome</keyword>
<keyword id="KW-0732">Signal</keyword>
<name>1106L_ASFB7</name>
<sequence>MLVIFLGILGLLASQVSSQLVGQLRPTEDPPEEELEYWCAYMESCQFCWDCQDGTCINKIDGSAIYKNEYVKACLVSRWLDKCMYDLDKGIYHTMNCSQPWSWNPYKYFRKEWKKDEL</sequence>
<dbReference type="EMBL" id="M36467">
    <property type="protein sequence ID" value="AAA42684.1"/>
    <property type="molecule type" value="Genomic_DNA"/>
</dbReference>
<dbReference type="EMBL" id="U18466">
    <property type="protein sequence ID" value="AAA65247.1"/>
    <property type="molecule type" value="Genomic_DNA"/>
</dbReference>
<dbReference type="PIR" id="I45348">
    <property type="entry name" value="I45348"/>
</dbReference>
<dbReference type="RefSeq" id="NP_042711.1">
    <property type="nucleotide sequence ID" value="NC_001659.2"/>
</dbReference>
<dbReference type="SMR" id="P68744"/>
<dbReference type="GeneID" id="22220401"/>
<dbReference type="KEGG" id="vg:22220401"/>
<dbReference type="Proteomes" id="UP000000624">
    <property type="component" value="Segment"/>
</dbReference>
<dbReference type="GO" id="GO:0044166">
    <property type="term" value="C:host cell endoplasmic reticulum lumen"/>
    <property type="evidence" value="ECO:0007669"/>
    <property type="project" value="UniProtKB-SubCell"/>
</dbReference>
<dbReference type="InterPro" id="IPR004848">
    <property type="entry name" value="ASFV_fam_110"/>
</dbReference>
<dbReference type="Pfam" id="PF01639">
    <property type="entry name" value="v110"/>
    <property type="match status" value="1"/>
</dbReference>
<dbReference type="PROSITE" id="PS00014">
    <property type="entry name" value="ER_TARGET"/>
    <property type="match status" value="1"/>
</dbReference>
<proteinExistence type="evidence at protein level"/>
<accession>P68744</accession>
<accession>P18556</accession>
<comment type="function">
    <text evidence="1">Plays a role in virus cell tropism, and may be required for efficient virus replication in macrophages.</text>
</comment>
<comment type="subcellular location">
    <subcellularLocation>
        <location evidence="4">Host endoplasmic reticulum lumen</location>
    </subcellularLocation>
</comment>
<comment type="induction">
    <text evidence="4 5">Expressed in the early phase of the viral replicative cycle.</text>
</comment>
<comment type="PTM">
    <text evidence="4">N-glycosylated.</text>
</comment>
<comment type="similarity">
    <text evidence="6">Belongs to the asfivirus MGF 110 family.</text>
</comment>
<feature type="signal peptide" evidence="2">
    <location>
        <begin position="1"/>
        <end position="18"/>
    </location>
</feature>
<feature type="chain" id="PRO_0000036733" description="Protein MGF 110-6L">
    <location>
        <begin position="19"/>
        <end position="118"/>
    </location>
</feature>
<feature type="short sequence motif" description="Prevents secretion from ER" evidence="3">
    <location>
        <begin position="115"/>
        <end position="118"/>
    </location>
</feature>
<feature type="glycosylation site" description="N-linked (GlcNAc...) asparagine; by host" evidence="2">
    <location>
        <position position="96"/>
    </location>
</feature>
<reference key="1">
    <citation type="journal article" date="1990" name="J. Virol.">
        <title>Multigene families in African swine fever virus: family 110.</title>
        <authorList>
            <person name="Almendral J.M."/>
            <person name="Almazan F."/>
            <person name="Blasco R."/>
            <person name="Vinuela E."/>
        </authorList>
    </citation>
    <scope>NUCLEOTIDE SEQUENCE [GENOMIC DNA]</scope>
</reference>
<reference key="2">
    <citation type="journal article" date="1995" name="Virology">
        <title>Analysis of the complete nucleotide sequence of African swine fever virus.</title>
        <authorList>
            <person name="Yanez R.J."/>
            <person name="Rodriguez J.M."/>
            <person name="Nogal M.L."/>
            <person name="Yuste L."/>
            <person name="Enriquez C."/>
            <person name="Rodriguez J.F."/>
            <person name="Vinuela E."/>
        </authorList>
    </citation>
    <scope>NUCLEOTIDE SEQUENCE [LARGE SCALE GENOMIC DNA]</scope>
</reference>
<reference key="3">
    <citation type="journal article" date="2004" name="J. Virol.">
        <title>The subcellular distribution of multigene family 110 proteins of African swine fever virus is determined by differences in C-terminal KDEL endoplasmic reticulum retention motifs.</title>
        <authorList>
            <person name="Netherton C."/>
            <person name="Rouiller I."/>
            <person name="Wileman T."/>
        </authorList>
    </citation>
    <scope>SUBCELLULAR LOCATION</scope>
    <scope>GLYCOSYLATION</scope>
    <scope>INDUCTION</scope>
</reference>
<reference key="4">
    <citation type="journal article" date="2020" name="J. Virol.">
        <title>The African Swine Fever Virus Transcriptome.</title>
        <authorList>
            <person name="Cackett G."/>
            <person name="Matelska D."/>
            <person name="Sykora M."/>
            <person name="Portugal R."/>
            <person name="Malecki M."/>
            <person name="Baehler J."/>
            <person name="Dixon L."/>
            <person name="Werner F."/>
        </authorList>
    </citation>
    <scope>INDUCTION</scope>
</reference>
<organismHost>
    <name type="scientific">Ornithodoros</name>
    <name type="common">relapsing fever ticks</name>
    <dbReference type="NCBI Taxonomy" id="6937"/>
</organismHost>
<organismHost>
    <name type="scientific">Sus scrofa</name>
    <name type="common">Pig</name>
    <dbReference type="NCBI Taxonomy" id="9823"/>
</organismHost>
<evidence type="ECO:0000250" key="1"/>
<evidence type="ECO:0000255" key="2"/>
<evidence type="ECO:0000255" key="3">
    <source>
        <dbReference type="PROSITE-ProRule" id="PRU10138"/>
    </source>
</evidence>
<evidence type="ECO:0000269" key="4">
    <source>
    </source>
</evidence>
<evidence type="ECO:0000269" key="5">
    <source>
    </source>
</evidence>
<evidence type="ECO:0000305" key="6"/>